<dbReference type="EC" id="3.5.1.5" evidence="1"/>
<dbReference type="EMBL" id="L42023">
    <property type="protein sequence ID" value="AAC22198.1"/>
    <property type="molecule type" value="Genomic_DNA"/>
</dbReference>
<dbReference type="PIR" id="I64075">
    <property type="entry name" value="I64075"/>
</dbReference>
<dbReference type="RefSeq" id="NP_438698.1">
    <property type="nucleotide sequence ID" value="NC_000907.1"/>
</dbReference>
<dbReference type="SMR" id="P44392"/>
<dbReference type="STRING" id="71421.HI_0540"/>
<dbReference type="EnsemblBacteria" id="AAC22198">
    <property type="protein sequence ID" value="AAC22198"/>
    <property type="gene ID" value="HI_0540"/>
</dbReference>
<dbReference type="KEGG" id="hin:HI_0540"/>
<dbReference type="PATRIC" id="fig|71421.8.peg.559"/>
<dbReference type="eggNOG" id="COG0832">
    <property type="taxonomic scope" value="Bacteria"/>
</dbReference>
<dbReference type="HOGENOM" id="CLU_129707_1_1_6"/>
<dbReference type="OrthoDB" id="9797217at2"/>
<dbReference type="PhylomeDB" id="P44392"/>
<dbReference type="BioCyc" id="HINF71421:G1GJ1-553-MONOMER"/>
<dbReference type="UniPathway" id="UPA00258">
    <property type="reaction ID" value="UER00370"/>
</dbReference>
<dbReference type="Proteomes" id="UP000000579">
    <property type="component" value="Chromosome"/>
</dbReference>
<dbReference type="GO" id="GO:0035550">
    <property type="term" value="C:urease complex"/>
    <property type="evidence" value="ECO:0007669"/>
    <property type="project" value="InterPro"/>
</dbReference>
<dbReference type="GO" id="GO:0009039">
    <property type="term" value="F:urease activity"/>
    <property type="evidence" value="ECO:0000318"/>
    <property type="project" value="GO_Central"/>
</dbReference>
<dbReference type="GO" id="GO:0043419">
    <property type="term" value="P:urea catabolic process"/>
    <property type="evidence" value="ECO:0000318"/>
    <property type="project" value="GO_Central"/>
</dbReference>
<dbReference type="CDD" id="cd00407">
    <property type="entry name" value="Urease_beta"/>
    <property type="match status" value="1"/>
</dbReference>
<dbReference type="FunFam" id="2.10.150.10:FF:000001">
    <property type="entry name" value="Urease subunit beta"/>
    <property type="match status" value="1"/>
</dbReference>
<dbReference type="Gene3D" id="2.10.150.10">
    <property type="entry name" value="Urease, beta subunit"/>
    <property type="match status" value="1"/>
</dbReference>
<dbReference type="HAMAP" id="MF_01954">
    <property type="entry name" value="Urease_beta"/>
    <property type="match status" value="1"/>
</dbReference>
<dbReference type="InterPro" id="IPR002019">
    <property type="entry name" value="Urease_beta-like"/>
</dbReference>
<dbReference type="InterPro" id="IPR036461">
    <property type="entry name" value="Urease_betasu_sf"/>
</dbReference>
<dbReference type="InterPro" id="IPR050069">
    <property type="entry name" value="Urease_subunit"/>
</dbReference>
<dbReference type="NCBIfam" id="NF009682">
    <property type="entry name" value="PRK13203.1"/>
    <property type="match status" value="1"/>
</dbReference>
<dbReference type="NCBIfam" id="TIGR00192">
    <property type="entry name" value="urease_beta"/>
    <property type="match status" value="1"/>
</dbReference>
<dbReference type="PANTHER" id="PTHR33569">
    <property type="entry name" value="UREASE"/>
    <property type="match status" value="1"/>
</dbReference>
<dbReference type="PANTHER" id="PTHR33569:SF1">
    <property type="entry name" value="UREASE"/>
    <property type="match status" value="1"/>
</dbReference>
<dbReference type="Pfam" id="PF00699">
    <property type="entry name" value="Urease_beta"/>
    <property type="match status" value="1"/>
</dbReference>
<dbReference type="SUPFAM" id="SSF51278">
    <property type="entry name" value="Urease, beta-subunit"/>
    <property type="match status" value="1"/>
</dbReference>
<proteinExistence type="inferred from homology"/>
<keyword id="KW-0963">Cytoplasm</keyword>
<keyword id="KW-0378">Hydrolase</keyword>
<keyword id="KW-1185">Reference proteome</keyword>
<name>URE2_HAEIN</name>
<comment type="catalytic activity">
    <reaction evidence="1">
        <text>urea + 2 H2O + H(+) = hydrogencarbonate + 2 NH4(+)</text>
        <dbReference type="Rhea" id="RHEA:20557"/>
        <dbReference type="ChEBI" id="CHEBI:15377"/>
        <dbReference type="ChEBI" id="CHEBI:15378"/>
        <dbReference type="ChEBI" id="CHEBI:16199"/>
        <dbReference type="ChEBI" id="CHEBI:17544"/>
        <dbReference type="ChEBI" id="CHEBI:28938"/>
        <dbReference type="EC" id="3.5.1.5"/>
    </reaction>
</comment>
<comment type="pathway">
    <text evidence="1">Nitrogen metabolism; urea degradation; CO(2) and NH(3) from urea (urease route): step 1/1.</text>
</comment>
<comment type="subunit">
    <text evidence="1">Heterotrimer of UreA (gamma), UreB (beta) and UreC (alpha) subunits. Three heterotrimers associate to form the active enzyme.</text>
</comment>
<comment type="subcellular location">
    <subcellularLocation>
        <location evidence="1">Cytoplasm</location>
    </subcellularLocation>
</comment>
<comment type="similarity">
    <text evidence="1">Belongs to the urease beta subunit family.</text>
</comment>
<evidence type="ECO:0000255" key="1">
    <source>
        <dbReference type="HAMAP-Rule" id="MF_01954"/>
    </source>
</evidence>
<organism>
    <name type="scientific">Haemophilus influenzae (strain ATCC 51907 / DSM 11121 / KW20 / Rd)</name>
    <dbReference type="NCBI Taxonomy" id="71421"/>
    <lineage>
        <taxon>Bacteria</taxon>
        <taxon>Pseudomonadati</taxon>
        <taxon>Pseudomonadota</taxon>
        <taxon>Gammaproteobacteria</taxon>
        <taxon>Pasteurellales</taxon>
        <taxon>Pasteurellaceae</taxon>
        <taxon>Haemophilus</taxon>
    </lineage>
</organism>
<gene>
    <name evidence="1" type="primary">ureB</name>
    <name type="ordered locus">HI_0540</name>
</gene>
<accession>P44392</accession>
<feature type="chain" id="PRO_0000067576" description="Urease subunit beta">
    <location>
        <begin position="1"/>
        <end position="101"/>
    </location>
</feature>
<sequence>MIPGEYQLAEGDILANVGRKTVKIEVTNSGDRPIQVGSHYHFFETNNALKFDRTLARGMRLNVPSGNAVRFEPGEVKSVELVAFGGNQIIYGFHNQIDGKL</sequence>
<reference key="1">
    <citation type="journal article" date="1995" name="Science">
        <title>Whole-genome random sequencing and assembly of Haemophilus influenzae Rd.</title>
        <authorList>
            <person name="Fleischmann R.D."/>
            <person name="Adams M.D."/>
            <person name="White O."/>
            <person name="Clayton R.A."/>
            <person name="Kirkness E.F."/>
            <person name="Kerlavage A.R."/>
            <person name="Bult C.J."/>
            <person name="Tomb J.-F."/>
            <person name="Dougherty B.A."/>
            <person name="Merrick J.M."/>
            <person name="McKenney K."/>
            <person name="Sutton G.G."/>
            <person name="FitzHugh W."/>
            <person name="Fields C.A."/>
            <person name="Gocayne J.D."/>
            <person name="Scott J.D."/>
            <person name="Shirley R."/>
            <person name="Liu L.-I."/>
            <person name="Glodek A."/>
            <person name="Kelley J.M."/>
            <person name="Weidman J.F."/>
            <person name="Phillips C.A."/>
            <person name="Spriggs T."/>
            <person name="Hedblom E."/>
            <person name="Cotton M.D."/>
            <person name="Utterback T.R."/>
            <person name="Hanna M.C."/>
            <person name="Nguyen D.T."/>
            <person name="Saudek D.M."/>
            <person name="Brandon R.C."/>
            <person name="Fine L.D."/>
            <person name="Fritchman J.L."/>
            <person name="Fuhrmann J.L."/>
            <person name="Geoghagen N.S.M."/>
            <person name="Gnehm C.L."/>
            <person name="McDonald L.A."/>
            <person name="Small K.V."/>
            <person name="Fraser C.M."/>
            <person name="Smith H.O."/>
            <person name="Venter J.C."/>
        </authorList>
    </citation>
    <scope>NUCLEOTIDE SEQUENCE [LARGE SCALE GENOMIC DNA]</scope>
    <source>
        <strain>ATCC 51907 / DSM 11121 / KW20 / Rd</strain>
    </source>
</reference>
<protein>
    <recommendedName>
        <fullName evidence="1">Urease subunit beta</fullName>
        <ecNumber evidence="1">3.5.1.5</ecNumber>
    </recommendedName>
    <alternativeName>
        <fullName evidence="1">Urea amidohydrolase subunit beta</fullName>
    </alternativeName>
</protein>